<gene>
    <name type="primary">DLGAP1</name>
    <name type="synonym">DAP1</name>
    <name type="synonym">GKAP</name>
</gene>
<feature type="chain" id="PRO_0000174288" description="Disks large-associated protein 1">
    <location>
        <begin position="1"/>
        <end position="977"/>
    </location>
</feature>
<feature type="region of interest" description="Disordered" evidence="4">
    <location>
        <begin position="150"/>
        <end position="203"/>
    </location>
</feature>
<feature type="region of interest" description="Disordered" evidence="4">
    <location>
        <begin position="349"/>
        <end position="371"/>
    </location>
</feature>
<feature type="region of interest" description="Interaction with DYL2" evidence="1">
    <location>
        <begin position="650"/>
        <end position="661"/>
    </location>
</feature>
<feature type="region of interest" description="Interaction with DYL2" evidence="1">
    <location>
        <begin position="672"/>
        <end position="683"/>
    </location>
</feature>
<feature type="region of interest" description="Disordered" evidence="4">
    <location>
        <begin position="899"/>
        <end position="965"/>
    </location>
</feature>
<feature type="short sequence motif" description="PDZ-binding" evidence="1">
    <location>
        <begin position="975"/>
        <end position="977"/>
    </location>
</feature>
<feature type="compositionally biased region" description="Basic and acidic residues" evidence="4">
    <location>
        <begin position="903"/>
        <end position="912"/>
    </location>
</feature>
<feature type="compositionally biased region" description="Basic and acidic residues" evidence="4">
    <location>
        <begin position="928"/>
        <end position="943"/>
    </location>
</feature>
<feature type="compositionally biased region" description="Polar residues" evidence="4">
    <location>
        <begin position="954"/>
        <end position="963"/>
    </location>
</feature>
<feature type="modified residue" description="Phosphoserine" evidence="3">
    <location>
        <position position="169"/>
    </location>
</feature>
<feature type="modified residue" description="Phosphoserine" evidence="3">
    <location>
        <position position="356"/>
    </location>
</feature>
<feature type="modified residue" description="Phosphoserine" evidence="3">
    <location>
        <position position="359"/>
    </location>
</feature>
<feature type="modified residue" description="Phosphoserine" evidence="3">
    <location>
        <position position="362"/>
    </location>
</feature>
<feature type="modified residue" description="Phosphoserine" evidence="3">
    <location>
        <position position="366"/>
    </location>
</feature>
<feature type="modified residue" description="Phosphoserine" evidence="2">
    <location>
        <position position="383"/>
    </location>
</feature>
<feature type="modified residue" description="Phosphoserine" evidence="3">
    <location>
        <position position="412"/>
    </location>
</feature>
<feature type="modified residue" description="Phosphoserine" evidence="3">
    <location>
        <position position="415"/>
    </location>
</feature>
<feature type="modified residue" description="Phosphoserine" evidence="3">
    <location>
        <position position="419"/>
    </location>
</feature>
<feature type="modified residue" description="Phosphoserine" evidence="2">
    <location>
        <position position="422"/>
    </location>
</feature>
<feature type="modified residue" description="Phosphoserine" evidence="3">
    <location>
        <position position="431"/>
    </location>
</feature>
<feature type="modified residue" description="Phosphoserine" evidence="3">
    <location>
        <position position="503"/>
    </location>
</feature>
<feature type="modified residue" description="Phosphoserine" evidence="3">
    <location>
        <position position="510"/>
    </location>
</feature>
<feature type="modified residue" description="Phosphoserine" evidence="3">
    <location>
        <position position="562"/>
    </location>
</feature>
<feature type="modified residue" description="Phosphothreonine" evidence="3">
    <location>
        <position position="563"/>
    </location>
</feature>
<feature type="modified residue" description="Phosphoserine" evidence="3">
    <location>
        <position position="565"/>
    </location>
</feature>
<feature type="modified residue" description="Phosphoserine" evidence="3">
    <location>
        <position position="589"/>
    </location>
</feature>
<feature type="modified residue" description="Phosphothreonine" evidence="3">
    <location>
        <position position="590"/>
    </location>
</feature>
<feature type="modified residue" description="Phosphoserine" evidence="3">
    <location>
        <position position="592"/>
    </location>
</feature>
<feature type="modified residue" description="Phosphoserine" evidence="2">
    <location>
        <position position="595"/>
    </location>
</feature>
<feature type="modified residue" description="Phosphoserine" evidence="3">
    <location>
        <position position="932"/>
    </location>
</feature>
<feature type="splice variant" id="VSP_006003" description="In isoform 2 and isoform 3." evidence="6 7">
    <location>
        <begin position="1"/>
        <end position="302"/>
    </location>
</feature>
<feature type="splice variant" id="VSP_043718" description="In isoform 5." evidence="5">
    <original>MKGLSGSRSHHHGVTCDSACDSLSHHSDRKP</original>
    <variation>MDLKTLKLFNSQLRCGWLLYIWNKAFMAHLR</variation>
    <location>
        <begin position="1"/>
        <end position="31"/>
    </location>
</feature>
<feature type="splice variant" id="VSP_043222" description="In isoform 4." evidence="5">
    <original>MKGLSGSRSHHHGVTCDSACDSLS</original>
    <variation>MIDLFKAEWVSSVCVQVSRNGRTD</variation>
    <location>
        <begin position="1"/>
        <end position="24"/>
    </location>
</feature>
<feature type="splice variant" id="VSP_043719" description="In isoform 6." evidence="5">
    <original>MKGLSGSRSHHHGVTCD</original>
    <variation>MNLIFHKDILFGIPANK</variation>
    <location>
        <begin position="1"/>
        <end position="17"/>
    </location>
</feature>
<feature type="splice variant" id="VSP_043720" description="In isoform 6." evidence="5">
    <location>
        <begin position="18"/>
        <end position="31"/>
    </location>
</feature>
<feature type="splice variant" id="VSP_043223" description="In isoform 4." evidence="5">
    <location>
        <begin position="25"/>
        <end position="318"/>
    </location>
</feature>
<feature type="splice variant" id="VSP_043721" description="In isoform 5 and isoform 6." evidence="5">
    <location>
        <begin position="32"/>
        <end position="319"/>
    </location>
</feature>
<feature type="splice variant" id="VSP_006004" description="In isoform 2 and isoform 3." evidence="6 7">
    <original>MVKSESCQQERSCQYLQ</original>
    <variation>MNLIFHKDILFGIPANK</variation>
    <location>
        <begin position="303"/>
        <end position="319"/>
    </location>
</feature>
<feature type="splice variant" id="VSP_043722" description="In isoform 5." evidence="5">
    <location>
        <begin position="530"/>
        <end position="557"/>
    </location>
</feature>
<feature type="splice variant" id="VSP_043723" description="In isoform 6." evidence="5">
    <original>T</original>
    <variation>TGVIKLSSAVE</variation>
    <location>
        <position position="530"/>
    </location>
</feature>
<feature type="splice variant" id="VSP_006005" description="In isoform 3 and isoform 7." evidence="5 6">
    <original>ERRAPPPVPKKPAKGPAPLIR</original>
    <variation>VEQCRFCMVHLKTCTNTGQSK</variation>
    <location>
        <begin position="909"/>
        <end position="929"/>
    </location>
</feature>
<feature type="splice variant" id="VSP_006006" description="In isoform 3 and isoform 7." evidence="5 6">
    <location>
        <begin position="930"/>
        <end position="977"/>
    </location>
</feature>
<feature type="sequence variant" id="VAR_053648" description="In dbSNP:rs35822832.">
    <original>R</original>
    <variation>Q</variation>
    <location>
        <position position="816"/>
    </location>
</feature>
<feature type="sequence conflict" description="In Ref. 2; AAC51119." evidence="8" ref="2">
    <original>A</original>
    <variation>P</variation>
    <location>
        <position position="734"/>
    </location>
</feature>
<feature type="sequence conflict" description="In Ref. 2; AAC51119." evidence="8" ref="2">
    <original>S</original>
    <variation>T</variation>
    <location>
        <position position="740"/>
    </location>
</feature>
<feature type="sequence conflict" description="In Ref. 2; AAC51119." evidence="8" ref="2">
    <original>AA</original>
    <variation>SP</variation>
    <location>
        <begin position="752"/>
        <end position="753"/>
    </location>
</feature>
<feature type="helix" evidence="9">
    <location>
        <begin position="374"/>
        <end position="380"/>
    </location>
</feature>
<feature type="strand" evidence="10">
    <location>
        <begin position="432"/>
        <end position="435"/>
    </location>
</feature>
<feature type="strand" evidence="11">
    <location>
        <begin position="486"/>
        <end position="488"/>
    </location>
</feature>
<reference key="1">
    <citation type="journal article" date="1997" name="Genes Cells">
        <title>DAP-1, a novel protein that interacts with the guanylate kinase-like domains of hDLG and PSD-95.</title>
        <authorList>
            <person name="Satoh K."/>
            <person name="Yanai H."/>
            <person name="Senda T."/>
            <person name="Kohu K."/>
            <person name="Nakamura T."/>
            <person name="Okumura N."/>
            <person name="Matsumine A."/>
            <person name="Kobayashi S."/>
            <person name="Toyoshima K."/>
            <person name="Akiyama T."/>
        </authorList>
    </citation>
    <scope>NUCLEOTIDE SEQUENCE [MRNA] (ISOFORMS 1 AND 2)</scope>
    <source>
        <tissue>Brain</tissue>
    </source>
</reference>
<reference key="2">
    <citation type="journal article" date="1997" name="J. Cell Biol.">
        <title>GKAP, a novel synaptic protein that interacts with the guanylate kinase-like domain of the PSD-95/SAP90 family of channel clustering molecules.</title>
        <authorList>
            <person name="Kim E."/>
            <person name="Naisbitt S."/>
            <person name="Hsueh Y.-P."/>
            <person name="Rao A."/>
            <person name="Rothschild A."/>
            <person name="Craig A.M."/>
            <person name="Sheng M."/>
        </authorList>
    </citation>
    <scope>NUCLEOTIDE SEQUENCE [MRNA] (ISOFORM 3)</scope>
</reference>
<reference key="3">
    <citation type="journal article" date="2004" name="Nat. Genet.">
        <title>Complete sequencing and characterization of 21,243 full-length human cDNAs.</title>
        <authorList>
            <person name="Ota T."/>
            <person name="Suzuki Y."/>
            <person name="Nishikawa T."/>
            <person name="Otsuki T."/>
            <person name="Sugiyama T."/>
            <person name="Irie R."/>
            <person name="Wakamatsu A."/>
            <person name="Hayashi K."/>
            <person name="Sato H."/>
            <person name="Nagai K."/>
            <person name="Kimura K."/>
            <person name="Makita H."/>
            <person name="Sekine M."/>
            <person name="Obayashi M."/>
            <person name="Nishi T."/>
            <person name="Shibahara T."/>
            <person name="Tanaka T."/>
            <person name="Ishii S."/>
            <person name="Yamamoto J."/>
            <person name="Saito K."/>
            <person name="Kawai Y."/>
            <person name="Isono Y."/>
            <person name="Nakamura Y."/>
            <person name="Nagahari K."/>
            <person name="Murakami K."/>
            <person name="Yasuda T."/>
            <person name="Iwayanagi T."/>
            <person name="Wagatsuma M."/>
            <person name="Shiratori A."/>
            <person name="Sudo H."/>
            <person name="Hosoiri T."/>
            <person name="Kaku Y."/>
            <person name="Kodaira H."/>
            <person name="Kondo H."/>
            <person name="Sugawara M."/>
            <person name="Takahashi M."/>
            <person name="Kanda K."/>
            <person name="Yokoi T."/>
            <person name="Furuya T."/>
            <person name="Kikkawa E."/>
            <person name="Omura Y."/>
            <person name="Abe K."/>
            <person name="Kamihara K."/>
            <person name="Katsuta N."/>
            <person name="Sato K."/>
            <person name="Tanikawa M."/>
            <person name="Yamazaki M."/>
            <person name="Ninomiya K."/>
            <person name="Ishibashi T."/>
            <person name="Yamashita H."/>
            <person name="Murakawa K."/>
            <person name="Fujimori K."/>
            <person name="Tanai H."/>
            <person name="Kimata M."/>
            <person name="Watanabe M."/>
            <person name="Hiraoka S."/>
            <person name="Chiba Y."/>
            <person name="Ishida S."/>
            <person name="Ono Y."/>
            <person name="Takiguchi S."/>
            <person name="Watanabe S."/>
            <person name="Yosida M."/>
            <person name="Hotuta T."/>
            <person name="Kusano J."/>
            <person name="Kanehori K."/>
            <person name="Takahashi-Fujii A."/>
            <person name="Hara H."/>
            <person name="Tanase T.-O."/>
            <person name="Nomura Y."/>
            <person name="Togiya S."/>
            <person name="Komai F."/>
            <person name="Hara R."/>
            <person name="Takeuchi K."/>
            <person name="Arita M."/>
            <person name="Imose N."/>
            <person name="Musashino K."/>
            <person name="Yuuki H."/>
            <person name="Oshima A."/>
            <person name="Sasaki N."/>
            <person name="Aotsuka S."/>
            <person name="Yoshikawa Y."/>
            <person name="Matsunawa H."/>
            <person name="Ichihara T."/>
            <person name="Shiohata N."/>
            <person name="Sano S."/>
            <person name="Moriya S."/>
            <person name="Momiyama H."/>
            <person name="Satoh N."/>
            <person name="Takami S."/>
            <person name="Terashima Y."/>
            <person name="Suzuki O."/>
            <person name="Nakagawa S."/>
            <person name="Senoh A."/>
            <person name="Mizoguchi H."/>
            <person name="Goto Y."/>
            <person name="Shimizu F."/>
            <person name="Wakebe H."/>
            <person name="Hishigaki H."/>
            <person name="Watanabe T."/>
            <person name="Sugiyama A."/>
            <person name="Takemoto M."/>
            <person name="Kawakami B."/>
            <person name="Yamazaki M."/>
            <person name="Watanabe K."/>
            <person name="Kumagai A."/>
            <person name="Itakura S."/>
            <person name="Fukuzumi Y."/>
            <person name="Fujimori Y."/>
            <person name="Komiyama M."/>
            <person name="Tashiro H."/>
            <person name="Tanigami A."/>
            <person name="Fujiwara T."/>
            <person name="Ono T."/>
            <person name="Yamada K."/>
            <person name="Fujii Y."/>
            <person name="Ozaki K."/>
            <person name="Hirao M."/>
            <person name="Ohmori Y."/>
            <person name="Kawabata A."/>
            <person name="Hikiji T."/>
            <person name="Kobatake N."/>
            <person name="Inagaki H."/>
            <person name="Ikema Y."/>
            <person name="Okamoto S."/>
            <person name="Okitani R."/>
            <person name="Kawakami T."/>
            <person name="Noguchi S."/>
            <person name="Itoh T."/>
            <person name="Shigeta K."/>
            <person name="Senba T."/>
            <person name="Matsumura K."/>
            <person name="Nakajima Y."/>
            <person name="Mizuno T."/>
            <person name="Morinaga M."/>
            <person name="Sasaki M."/>
            <person name="Togashi T."/>
            <person name="Oyama M."/>
            <person name="Hata H."/>
            <person name="Watanabe M."/>
            <person name="Komatsu T."/>
            <person name="Mizushima-Sugano J."/>
            <person name="Satoh T."/>
            <person name="Shirai Y."/>
            <person name="Takahashi Y."/>
            <person name="Nakagawa K."/>
            <person name="Okumura K."/>
            <person name="Nagase T."/>
            <person name="Nomura N."/>
            <person name="Kikuchi H."/>
            <person name="Masuho Y."/>
            <person name="Yamashita R."/>
            <person name="Nakai K."/>
            <person name="Yada T."/>
            <person name="Nakamura Y."/>
            <person name="Ohara O."/>
            <person name="Isogai T."/>
            <person name="Sugano S."/>
        </authorList>
    </citation>
    <scope>NUCLEOTIDE SEQUENCE [LARGE SCALE MRNA] (ISOFORMS 4; 5; 6 AND 7)</scope>
    <source>
        <tissue>Brain</tissue>
        <tissue>Thalamus</tissue>
    </source>
</reference>
<reference key="4">
    <citation type="journal article" date="2005" name="Nature">
        <title>DNA sequence and analysis of human chromosome 18.</title>
        <authorList>
            <person name="Nusbaum C."/>
            <person name="Zody M.C."/>
            <person name="Borowsky M.L."/>
            <person name="Kamal M."/>
            <person name="Kodira C.D."/>
            <person name="Taylor T.D."/>
            <person name="Whittaker C.A."/>
            <person name="Chang J.L."/>
            <person name="Cuomo C.A."/>
            <person name="Dewar K."/>
            <person name="FitzGerald M.G."/>
            <person name="Yang X."/>
            <person name="Abouelleil A."/>
            <person name="Allen N.R."/>
            <person name="Anderson S."/>
            <person name="Bloom T."/>
            <person name="Bugalter B."/>
            <person name="Butler J."/>
            <person name="Cook A."/>
            <person name="DeCaprio D."/>
            <person name="Engels R."/>
            <person name="Garber M."/>
            <person name="Gnirke A."/>
            <person name="Hafez N."/>
            <person name="Hall J.L."/>
            <person name="Norman C.H."/>
            <person name="Itoh T."/>
            <person name="Jaffe D.B."/>
            <person name="Kuroki Y."/>
            <person name="Lehoczky J."/>
            <person name="Lui A."/>
            <person name="Macdonald P."/>
            <person name="Mauceli E."/>
            <person name="Mikkelsen T.S."/>
            <person name="Naylor J.W."/>
            <person name="Nicol R."/>
            <person name="Nguyen C."/>
            <person name="Noguchi H."/>
            <person name="O'Leary S.B."/>
            <person name="Piqani B."/>
            <person name="Smith C.L."/>
            <person name="Talamas J.A."/>
            <person name="Topham K."/>
            <person name="Totoki Y."/>
            <person name="Toyoda A."/>
            <person name="Wain H.M."/>
            <person name="Young S.K."/>
            <person name="Zeng Q."/>
            <person name="Zimmer A.R."/>
            <person name="Fujiyama A."/>
            <person name="Hattori M."/>
            <person name="Birren B.W."/>
            <person name="Sakaki Y."/>
            <person name="Lander E.S."/>
        </authorList>
    </citation>
    <scope>NUCLEOTIDE SEQUENCE [LARGE SCALE GENOMIC DNA]</scope>
</reference>
<reference key="5">
    <citation type="submission" date="2005-09" db="EMBL/GenBank/DDBJ databases">
        <authorList>
            <person name="Mural R.J."/>
            <person name="Istrail S."/>
            <person name="Sutton G.G."/>
            <person name="Florea L."/>
            <person name="Halpern A.L."/>
            <person name="Mobarry C.M."/>
            <person name="Lippert R."/>
            <person name="Walenz B."/>
            <person name="Shatkay H."/>
            <person name="Dew I."/>
            <person name="Miller J.R."/>
            <person name="Flanigan M.J."/>
            <person name="Edwards N.J."/>
            <person name="Bolanos R."/>
            <person name="Fasulo D."/>
            <person name="Halldorsson B.V."/>
            <person name="Hannenhalli S."/>
            <person name="Turner R."/>
            <person name="Yooseph S."/>
            <person name="Lu F."/>
            <person name="Nusskern D.R."/>
            <person name="Shue B.C."/>
            <person name="Zheng X.H."/>
            <person name="Zhong F."/>
            <person name="Delcher A.L."/>
            <person name="Huson D.H."/>
            <person name="Kravitz S.A."/>
            <person name="Mouchard L."/>
            <person name="Reinert K."/>
            <person name="Remington K.A."/>
            <person name="Clark A.G."/>
            <person name="Waterman M.S."/>
            <person name="Eichler E.E."/>
            <person name="Adams M.D."/>
            <person name="Hunkapiller M.W."/>
            <person name="Myers E.W."/>
            <person name="Venter J.C."/>
        </authorList>
    </citation>
    <scope>NUCLEOTIDE SEQUENCE [LARGE SCALE GENOMIC DNA]</scope>
</reference>
<reference key="6">
    <citation type="journal article" date="2004" name="Genome Res.">
        <title>The status, quality, and expansion of the NIH full-length cDNA project: the Mammalian Gene Collection (MGC).</title>
        <authorList>
            <consortium name="The MGC Project Team"/>
        </authorList>
    </citation>
    <scope>NUCLEOTIDE SEQUENCE [LARGE SCALE MRNA] (ISOFORM 1)</scope>
    <source>
        <tissue>Brain</tissue>
        <tissue>Testis</tissue>
    </source>
</reference>
<protein>
    <recommendedName>
        <fullName>Disks large-associated protein 1</fullName>
        <shortName>DAP-1</shortName>
    </recommendedName>
    <alternativeName>
        <fullName>Guanylate kinase-associated protein</fullName>
        <shortName>hGKAP</shortName>
    </alternativeName>
    <alternativeName>
        <fullName>PSD-95/SAP90-binding protein 1</fullName>
    </alternativeName>
    <alternativeName>
        <fullName>SAP90/PSD-95-associated protein 1</fullName>
        <shortName>SAPAP1</shortName>
    </alternativeName>
</protein>
<accession>O14490</accession>
<accession>A8MWN8</accession>
<accession>B2RMU8</accession>
<accession>B7WPA1</accession>
<accession>B7Z2H2</accession>
<accession>B7Z2I2</accession>
<accession>B7Z9Y4</accession>
<accession>O14489</accession>
<accession>P78335</accession>
<evidence type="ECO:0000250" key="1"/>
<evidence type="ECO:0000250" key="2">
    <source>
        <dbReference type="UniProtKB" id="P97836"/>
    </source>
</evidence>
<evidence type="ECO:0000250" key="3">
    <source>
        <dbReference type="UniProtKB" id="Q9D415"/>
    </source>
</evidence>
<evidence type="ECO:0000256" key="4">
    <source>
        <dbReference type="SAM" id="MobiDB-lite"/>
    </source>
</evidence>
<evidence type="ECO:0000303" key="5">
    <source>
    </source>
</evidence>
<evidence type="ECO:0000303" key="6">
    <source>
    </source>
</evidence>
<evidence type="ECO:0000303" key="7">
    <source>
    </source>
</evidence>
<evidence type="ECO:0000305" key="8"/>
<evidence type="ECO:0007829" key="9">
    <source>
        <dbReference type="PDB" id="5YPO"/>
    </source>
</evidence>
<evidence type="ECO:0007829" key="10">
    <source>
        <dbReference type="PDB" id="6TNQ"/>
    </source>
</evidence>
<evidence type="ECO:0007829" key="11">
    <source>
        <dbReference type="PDB" id="6TQ0"/>
    </source>
</evidence>
<sequence>MKGLSGSRSHHHGVTCDSACDSLSHHSDRKPYLLSPVEHHPADHPYYTQRNSFQAECVGPFSDPLASSTFPRRHYTSQQELKDECALVPRTLATKANRIPANLLDQFERQLPLSRDGYHTLQYKRTAVEHRSDSPGRIRHLVHSVQKLFTKSHSLEGPSKGSVNGGKASPDEAQAARYGKRSKSKERRAEPKARPSTSPGWWSSDDNLDGDMCIYHAPSGVMTMGRCPDRSASQYFLEAYNTISEQAVKASRSNNDVKCSTCANLPVSLDTPLLKKSAWSSTLTVSRAREVYQKASVNMDQAMVKSESCQQERSCQYLQVPQDEWTGYTPRGKDDEIPCRRMRSGSYIKAMGDEDSGDSDTSPKPSPKVAARRESYLKATQPSLTELTTLKISNEHSPKLQIRSHSYLRAVSEVSINRSLDSLDPAGLLTSPKFRSRNESYMRAMSTISQVSEMEVNGQFESVCESVFSELESQAVEALDLPMPGCFRMRSHSYVRAIEKGCSQDDECVSLRSSSPPRTTTTVRTIQSSTVSSCITTYKKTPPPVPPRTTTKPFISITAQSSTESAQDAYMDGQGQRGDIISQSGLSNSTESLDSMKALTAAIEAANAQIHGPASQHMGNNTATVTTTTTIATVTTEDRKKDHFKKNRCLSIGIQVDDAEEPDKTGENKAPSKFQSVGVQVEEEKCFRRFTRSNSVTTAVQADLDFHDNLENSLESIEDNSCPGPMARQFSRDASTSTVSIQGSGNHYHACAADDDFDTDFDPSILPPPDPWIDSITEDPLEAVQRSVCHRDGHWFLKLLQAERDRMEGWCQQMEREERENNLPEDILGKIRTAVGSAQLLMAQKFYQFRELCEENLNPNAHPRPTSQDLAGFWDMLQLSIENISMKFDELHQLKANNWKQMDPLDKKERRAPPPVPKKPAKGPAPLIRERSLESSQRQEARKRLMAAKRAASVRQNSATESAESIEIYIPEAQTRL</sequence>
<name>DLGP1_HUMAN</name>
<comment type="function">
    <text>Part of the postsynaptic scaffold in neuronal cells.</text>
</comment>
<comment type="subunit">
    <text evidence="2 3">Interacts with guanylate kinase-like domain of DLG1, DLG2, DLG3, DLG4 and AIP1. Interacts with the PDZ domain of SHANK1, SHANK2 and SHANK3. Found in a complex with DLG4 and SHANK1, SHANK2 or SHANK3. Found in a complex with DLG4 and BEGAIN. Interacts with DYL2 and LRFN1 (By similarity). Interacts with MPP2 (via the SH3-Guanylate kinase-like sub-module) (By similarity).</text>
</comment>
<comment type="interaction">
    <interactant intactId="EBI-1753207">
        <id>O14490</id>
    </interactant>
    <interactant intactId="EBI-80389">
        <id>P78352</id>
        <label>DLG4</label>
    </interactant>
    <organismsDiffer>false</organismsDiffer>
    <experiments>6</experiments>
</comment>
<comment type="interaction">
    <interactant intactId="EBI-1753207">
        <id>O14490</id>
    </interactant>
    <interactant intactId="EBI-401755">
        <id>P62993</id>
        <label>GRB2</label>
    </interactant>
    <organismsDiffer>false</organismsDiffer>
    <experiments>3</experiments>
</comment>
<comment type="interaction">
    <interactant intactId="EBI-1753207">
        <id>O14490</id>
    </interactant>
    <interactant intactId="EBI-389883">
        <id>P16333</id>
        <label>NCK1</label>
    </interactant>
    <organismsDiffer>false</organismsDiffer>
    <experiments>4</experiments>
</comment>
<comment type="interaction">
    <interactant intactId="EBI-1753207">
        <id>O14490</id>
    </interactant>
    <interactant intactId="EBI-389325">
        <id>Q62696</id>
        <label>Dlg1</label>
    </interactant>
    <organismsDiffer>true</organismsDiffer>
    <experiments>2</experiments>
</comment>
<comment type="subcellular location">
    <subcellularLocation>
        <location evidence="1">Cell membrane</location>
        <topology evidence="1">Peripheral membrane protein</topology>
    </subcellularLocation>
    <subcellularLocation>
        <location evidence="1">Postsynaptic density</location>
    </subcellularLocation>
    <subcellularLocation>
        <location evidence="1">Synapse</location>
    </subcellularLocation>
</comment>
<comment type="alternative products">
    <event type="alternative splicing"/>
    <isoform>
        <id>O14490-1</id>
        <name>1</name>
        <name>DAP1-alpha</name>
        <sequence type="displayed"/>
    </isoform>
    <isoform>
        <id>O14490-2</id>
        <name>2</name>
        <name>DAP1-beta</name>
        <sequence type="described" ref="VSP_006003 VSP_006004"/>
    </isoform>
    <isoform>
        <id>O14490-3</id>
        <name>3</name>
        <sequence type="described" ref="VSP_006003 VSP_006004 VSP_006005 VSP_006006"/>
    </isoform>
    <isoform>
        <id>O14490-4</id>
        <name>4</name>
        <sequence type="described" ref="VSP_043222 VSP_043223"/>
    </isoform>
    <isoform>
        <id>O14490-5</id>
        <name>5</name>
        <sequence type="described" ref="VSP_043718 VSP_043721 VSP_043722"/>
    </isoform>
    <isoform>
        <id>O14490-6</id>
        <name>6</name>
        <sequence type="described" ref="VSP_043719 VSP_043720 VSP_043721 VSP_043723"/>
    </isoform>
    <isoform>
        <id>O14490-7</id>
        <name>7</name>
        <sequence type="described" ref="VSP_006005 VSP_006006"/>
    </isoform>
</comment>
<comment type="tissue specificity">
    <text>Expressed in brain.</text>
</comment>
<comment type="PTM">
    <text evidence="2">Ubiquitinated by TRIM3; leading to proteasomal degradation.</text>
</comment>
<comment type="similarity">
    <text evidence="8">Belongs to the SAPAP family.</text>
</comment>
<dbReference type="EMBL" id="AB000277">
    <property type="protein sequence ID" value="BAA23258.1"/>
    <property type="molecule type" value="mRNA"/>
</dbReference>
<dbReference type="EMBL" id="AB000276">
    <property type="protein sequence ID" value="BAA23257.1"/>
    <property type="molecule type" value="mRNA"/>
</dbReference>
<dbReference type="EMBL" id="U67988">
    <property type="protein sequence ID" value="AAC51119.1"/>
    <property type="molecule type" value="mRNA"/>
</dbReference>
<dbReference type="EMBL" id="AK294717">
    <property type="protein sequence ID" value="BAH11858.1"/>
    <property type="molecule type" value="mRNA"/>
</dbReference>
<dbReference type="EMBL" id="AK294747">
    <property type="protein sequence ID" value="BAH11868.1"/>
    <property type="molecule type" value="mRNA"/>
</dbReference>
<dbReference type="EMBL" id="AK299880">
    <property type="protein sequence ID" value="BAH13160.1"/>
    <property type="molecule type" value="mRNA"/>
</dbReference>
<dbReference type="EMBL" id="AK316099">
    <property type="protein sequence ID" value="BAH14470.1"/>
    <property type="molecule type" value="mRNA"/>
</dbReference>
<dbReference type="EMBL" id="AP002472">
    <property type="status" value="NOT_ANNOTATED_CDS"/>
    <property type="molecule type" value="Genomic_DNA"/>
</dbReference>
<dbReference type="EMBL" id="AP002478">
    <property type="status" value="NOT_ANNOTATED_CDS"/>
    <property type="molecule type" value="Genomic_DNA"/>
</dbReference>
<dbReference type="EMBL" id="AP005130">
    <property type="status" value="NOT_ANNOTATED_CDS"/>
    <property type="molecule type" value="Genomic_DNA"/>
</dbReference>
<dbReference type="EMBL" id="AP005204">
    <property type="status" value="NOT_ANNOTATED_CDS"/>
    <property type="molecule type" value="Genomic_DNA"/>
</dbReference>
<dbReference type="EMBL" id="AP005241">
    <property type="status" value="NOT_ANNOTATED_CDS"/>
    <property type="molecule type" value="Genomic_DNA"/>
</dbReference>
<dbReference type="EMBL" id="CH471113">
    <property type="protein sequence ID" value="EAX01654.1"/>
    <property type="molecule type" value="Genomic_DNA"/>
</dbReference>
<dbReference type="EMBL" id="CH471113">
    <property type="protein sequence ID" value="EAX01658.1"/>
    <property type="molecule type" value="Genomic_DNA"/>
</dbReference>
<dbReference type="EMBL" id="CH471113">
    <property type="protein sequence ID" value="EAX01659.1"/>
    <property type="molecule type" value="Genomic_DNA"/>
</dbReference>
<dbReference type="EMBL" id="BC136453">
    <property type="protein sequence ID" value="AAI36454.1"/>
    <property type="molecule type" value="mRNA"/>
</dbReference>
<dbReference type="EMBL" id="BC136454">
    <property type="protein sequence ID" value="AAI36455.1"/>
    <property type="molecule type" value="mRNA"/>
</dbReference>
<dbReference type="CCDS" id="CCDS11836.1">
    <molecule id="O14490-1"/>
</dbReference>
<dbReference type="CCDS" id="CCDS42406.1">
    <molecule id="O14490-2"/>
</dbReference>
<dbReference type="CCDS" id="CCDS56049.1">
    <molecule id="O14490-3"/>
</dbReference>
<dbReference type="CCDS" id="CCDS56050.1">
    <molecule id="O14490-6"/>
</dbReference>
<dbReference type="CCDS" id="CCDS56051.1">
    <molecule id="O14490-4"/>
</dbReference>
<dbReference type="CCDS" id="CCDS56052.1">
    <molecule id="O14490-5"/>
</dbReference>
<dbReference type="CCDS" id="CCDS56053.1">
    <molecule id="O14490-7"/>
</dbReference>
<dbReference type="PIR" id="T00014">
    <property type="entry name" value="T00014"/>
</dbReference>
<dbReference type="RefSeq" id="NP_001003809.1">
    <molecule id="O14490-2"/>
    <property type="nucleotide sequence ID" value="NM_001003809.3"/>
</dbReference>
<dbReference type="RefSeq" id="NP_001229690.1">
    <molecule id="O14490-7"/>
    <property type="nucleotide sequence ID" value="NM_001242761.2"/>
</dbReference>
<dbReference type="RefSeq" id="NP_001229691.1">
    <molecule id="O14490-5"/>
    <property type="nucleotide sequence ID" value="NM_001242762.2"/>
</dbReference>
<dbReference type="RefSeq" id="NP_001229692.1">
    <property type="nucleotide sequence ID" value="NM_001242763.1"/>
</dbReference>
<dbReference type="RefSeq" id="NP_001229693.1">
    <molecule id="O14490-4"/>
    <property type="nucleotide sequence ID" value="NM_001242764.2"/>
</dbReference>
<dbReference type="RefSeq" id="NP_001229694.1">
    <molecule id="O14490-3"/>
    <property type="nucleotide sequence ID" value="NM_001242765.2"/>
</dbReference>
<dbReference type="RefSeq" id="NP_001229695.1">
    <molecule id="O14490-6"/>
    <property type="nucleotide sequence ID" value="NM_001242766.2"/>
</dbReference>
<dbReference type="RefSeq" id="NP_001385456.1">
    <molecule id="O14490-1"/>
    <property type="nucleotide sequence ID" value="NM_001398527.1"/>
</dbReference>
<dbReference type="RefSeq" id="NP_004737.2">
    <molecule id="O14490-1"/>
    <property type="nucleotide sequence ID" value="NM_004746.3"/>
</dbReference>
<dbReference type="RefSeq" id="XP_047293889.1">
    <molecule id="O14490-1"/>
    <property type="nucleotide sequence ID" value="XM_047437933.1"/>
</dbReference>
<dbReference type="RefSeq" id="XP_054175336.1">
    <molecule id="O14490-1"/>
    <property type="nucleotide sequence ID" value="XM_054319361.1"/>
</dbReference>
<dbReference type="PDB" id="5YPO">
    <property type="method" value="X-ray"/>
    <property type="resolution" value="2.29 A"/>
    <property type="chains" value="C/D=370-384"/>
</dbReference>
<dbReference type="PDB" id="6TNQ">
    <property type="method" value="X-ray"/>
    <property type="resolution" value="1.30 A"/>
    <property type="chains" value="B/D/F=430-437"/>
</dbReference>
<dbReference type="PDB" id="6TQ0">
    <property type="method" value="X-ray"/>
    <property type="resolution" value="1.95 A"/>
    <property type="chains" value="B/D/F/H/J/L/N/P=483-490"/>
</dbReference>
<dbReference type="PDBsum" id="5YPO"/>
<dbReference type="PDBsum" id="6TNQ"/>
<dbReference type="PDBsum" id="6TQ0"/>
<dbReference type="SMR" id="O14490"/>
<dbReference type="BioGRID" id="114660">
    <property type="interactions" value="22"/>
</dbReference>
<dbReference type="CORUM" id="O14490"/>
<dbReference type="FunCoup" id="O14490">
    <property type="interactions" value="337"/>
</dbReference>
<dbReference type="IntAct" id="O14490">
    <property type="interactions" value="14"/>
</dbReference>
<dbReference type="MINT" id="O14490"/>
<dbReference type="STRING" id="9606.ENSP00000316377"/>
<dbReference type="GlyCosmos" id="O14490">
    <property type="glycosylation" value="4 sites, 1 glycan"/>
</dbReference>
<dbReference type="GlyGen" id="O14490">
    <property type="glycosylation" value="4 sites, 1 O-linked glycan (4 sites)"/>
</dbReference>
<dbReference type="iPTMnet" id="O14490"/>
<dbReference type="PhosphoSitePlus" id="O14490"/>
<dbReference type="BioMuta" id="DLGAP1"/>
<dbReference type="jPOST" id="O14490"/>
<dbReference type="MassIVE" id="O14490"/>
<dbReference type="PaxDb" id="9606-ENSP00000316377"/>
<dbReference type="PeptideAtlas" id="O14490"/>
<dbReference type="ProteomicsDB" id="48028">
    <molecule id="O14490-1"/>
</dbReference>
<dbReference type="ProteomicsDB" id="48029">
    <molecule id="O14490-2"/>
</dbReference>
<dbReference type="ProteomicsDB" id="48030">
    <molecule id="O14490-3"/>
</dbReference>
<dbReference type="ProteomicsDB" id="48031">
    <molecule id="O14490-4"/>
</dbReference>
<dbReference type="ProteomicsDB" id="48032">
    <molecule id="O14490-5"/>
</dbReference>
<dbReference type="ProteomicsDB" id="48033">
    <molecule id="O14490-6"/>
</dbReference>
<dbReference type="ProteomicsDB" id="48034">
    <molecule id="O14490-7"/>
</dbReference>
<dbReference type="ABCD" id="O14490">
    <property type="antibodies" value="3 sequenced antibodies"/>
</dbReference>
<dbReference type="Antibodypedia" id="21914">
    <property type="antibodies" value="236 antibodies from 39 providers"/>
</dbReference>
<dbReference type="DNASU" id="9229"/>
<dbReference type="Ensembl" id="ENST00000315677.8">
    <molecule id="O14490-1"/>
    <property type="protein sequence ID" value="ENSP00000316377.3"/>
    <property type="gene ID" value="ENSG00000170579.19"/>
</dbReference>
<dbReference type="Ensembl" id="ENST00000400145.6">
    <molecule id="O14490-3"/>
    <property type="protein sequence ID" value="ENSP00000383010.2"/>
    <property type="gene ID" value="ENSG00000170579.19"/>
</dbReference>
<dbReference type="Ensembl" id="ENST00000400147.6">
    <molecule id="O14490-2"/>
    <property type="protein sequence ID" value="ENSP00000383011.2"/>
    <property type="gene ID" value="ENSG00000170579.19"/>
</dbReference>
<dbReference type="Ensembl" id="ENST00000400155.5">
    <molecule id="O14490-4"/>
    <property type="protein sequence ID" value="ENSP00000383019.1"/>
    <property type="gene ID" value="ENSG00000170579.19"/>
</dbReference>
<dbReference type="Ensembl" id="ENST00000534970.5">
    <molecule id="O14490-5"/>
    <property type="protein sequence ID" value="ENSP00000437817.1"/>
    <property type="gene ID" value="ENSG00000170579.19"/>
</dbReference>
<dbReference type="Ensembl" id="ENST00000539435.5">
    <molecule id="O14490-6"/>
    <property type="protein sequence ID" value="ENSP00000446312.1"/>
    <property type="gene ID" value="ENSG00000170579.19"/>
</dbReference>
<dbReference type="Ensembl" id="ENST00000581527.5">
    <molecule id="O14490-7"/>
    <property type="protein sequence ID" value="ENSP00000463864.1"/>
    <property type="gene ID" value="ENSG00000170579.19"/>
</dbReference>
<dbReference type="Ensembl" id="ENST00000581699.5">
    <molecule id="O14490-4"/>
    <property type="protein sequence ID" value="ENSP00000462848.1"/>
    <property type="gene ID" value="ENSG00000170579.19"/>
</dbReference>
<dbReference type="GeneID" id="9229"/>
<dbReference type="KEGG" id="hsa:9229"/>
<dbReference type="MANE-Select" id="ENST00000315677.8">
    <property type="protein sequence ID" value="ENSP00000316377.3"/>
    <property type="RefSeq nucleotide sequence ID" value="NM_004746.4"/>
    <property type="RefSeq protein sequence ID" value="NP_004737.2"/>
</dbReference>
<dbReference type="UCSC" id="uc002kme.3">
    <molecule id="O14490-1"/>
    <property type="organism name" value="human"/>
</dbReference>
<dbReference type="AGR" id="HGNC:2905"/>
<dbReference type="CTD" id="9229"/>
<dbReference type="DisGeNET" id="9229"/>
<dbReference type="GeneCards" id="DLGAP1"/>
<dbReference type="HGNC" id="HGNC:2905">
    <property type="gene designation" value="DLGAP1"/>
</dbReference>
<dbReference type="HPA" id="ENSG00000170579">
    <property type="expression patterns" value="Tissue enriched (brain)"/>
</dbReference>
<dbReference type="MIM" id="605445">
    <property type="type" value="gene"/>
</dbReference>
<dbReference type="neXtProt" id="NX_O14490"/>
<dbReference type="OpenTargets" id="ENSG00000170579"/>
<dbReference type="PharmGKB" id="PA27361"/>
<dbReference type="VEuPathDB" id="HostDB:ENSG00000170579"/>
<dbReference type="eggNOG" id="KOG3971">
    <property type="taxonomic scope" value="Eukaryota"/>
</dbReference>
<dbReference type="GeneTree" id="ENSGT00940000156220"/>
<dbReference type="HOGENOM" id="CLU_010880_3_0_1"/>
<dbReference type="InParanoid" id="O14490"/>
<dbReference type="OMA" id="LSIGIQX"/>
<dbReference type="OrthoDB" id="10036956at2759"/>
<dbReference type="PAN-GO" id="O14490">
    <property type="GO annotations" value="4 GO annotations based on evolutionary models"/>
</dbReference>
<dbReference type="PhylomeDB" id="O14490"/>
<dbReference type="TreeFam" id="TF321382"/>
<dbReference type="PathwayCommons" id="O14490"/>
<dbReference type="Reactome" id="R-HSA-6794361">
    <property type="pathway name" value="Neurexins and neuroligins"/>
</dbReference>
<dbReference type="SignaLink" id="O14490"/>
<dbReference type="SIGNOR" id="O14490"/>
<dbReference type="BioGRID-ORCS" id="9229">
    <property type="hits" value="13 hits in 1138 CRISPR screens"/>
</dbReference>
<dbReference type="CD-CODE" id="FB4E32DD">
    <property type="entry name" value="Presynaptic clusters and postsynaptic densities"/>
</dbReference>
<dbReference type="ChiTaRS" id="DLGAP1">
    <property type="organism name" value="human"/>
</dbReference>
<dbReference type="GeneWiki" id="DLGAP1"/>
<dbReference type="GenomeRNAi" id="9229"/>
<dbReference type="Pharos" id="O14490">
    <property type="development level" value="Tbio"/>
</dbReference>
<dbReference type="PRO" id="PR:O14490"/>
<dbReference type="Proteomes" id="UP000005640">
    <property type="component" value="Chromosome 18"/>
</dbReference>
<dbReference type="RNAct" id="O14490">
    <property type="molecule type" value="protein"/>
</dbReference>
<dbReference type="Bgee" id="ENSG00000170579">
    <property type="expression patterns" value="Expressed in Brodmann (1909) area 23 and 164 other cell types or tissues"/>
</dbReference>
<dbReference type="ExpressionAtlas" id="O14490">
    <property type="expression patterns" value="baseline and differential"/>
</dbReference>
<dbReference type="GO" id="GO:0098978">
    <property type="term" value="C:glutamatergic synapse"/>
    <property type="evidence" value="ECO:0000318"/>
    <property type="project" value="GO_Central"/>
</dbReference>
<dbReference type="GO" id="GO:0005886">
    <property type="term" value="C:plasma membrane"/>
    <property type="evidence" value="ECO:0000304"/>
    <property type="project" value="Reactome"/>
</dbReference>
<dbReference type="GO" id="GO:0014069">
    <property type="term" value="C:postsynaptic density"/>
    <property type="evidence" value="ECO:0007669"/>
    <property type="project" value="UniProtKB-SubCell"/>
</dbReference>
<dbReference type="GO" id="GO:0099572">
    <property type="term" value="C:postsynaptic specialization"/>
    <property type="evidence" value="ECO:0000318"/>
    <property type="project" value="GO_Central"/>
</dbReference>
<dbReference type="GO" id="GO:0060090">
    <property type="term" value="F:molecular adaptor activity"/>
    <property type="evidence" value="ECO:0000318"/>
    <property type="project" value="GO_Central"/>
</dbReference>
<dbReference type="GO" id="GO:0044877">
    <property type="term" value="F:protein-containing complex binding"/>
    <property type="evidence" value="ECO:0000250"/>
    <property type="project" value="UniProtKB"/>
</dbReference>
<dbReference type="GO" id="GO:0007268">
    <property type="term" value="P:chemical synaptic transmission"/>
    <property type="evidence" value="ECO:0000304"/>
    <property type="project" value="ProtInc"/>
</dbReference>
<dbReference type="GO" id="GO:0050804">
    <property type="term" value="P:modulation of chemical synaptic transmission"/>
    <property type="evidence" value="ECO:0000318"/>
    <property type="project" value="GO_Central"/>
</dbReference>
<dbReference type="InterPro" id="IPR005026">
    <property type="entry name" value="SAPAP"/>
</dbReference>
<dbReference type="PANTHER" id="PTHR12353:SF7">
    <property type="entry name" value="DISKS LARGE-ASSOCIATED PROTEIN 1"/>
    <property type="match status" value="1"/>
</dbReference>
<dbReference type="PANTHER" id="PTHR12353">
    <property type="entry name" value="DISKS LARGE-ASSOCIATED PROTEIN DAP SAP90/PSD-95-ASSOCIATED PROTEIN"/>
    <property type="match status" value="1"/>
</dbReference>
<dbReference type="Pfam" id="PF03359">
    <property type="entry name" value="GKAP"/>
    <property type="match status" value="1"/>
</dbReference>
<organism>
    <name type="scientific">Homo sapiens</name>
    <name type="common">Human</name>
    <dbReference type="NCBI Taxonomy" id="9606"/>
    <lineage>
        <taxon>Eukaryota</taxon>
        <taxon>Metazoa</taxon>
        <taxon>Chordata</taxon>
        <taxon>Craniata</taxon>
        <taxon>Vertebrata</taxon>
        <taxon>Euteleostomi</taxon>
        <taxon>Mammalia</taxon>
        <taxon>Eutheria</taxon>
        <taxon>Euarchontoglires</taxon>
        <taxon>Primates</taxon>
        <taxon>Haplorrhini</taxon>
        <taxon>Catarrhini</taxon>
        <taxon>Hominidae</taxon>
        <taxon>Homo</taxon>
    </lineage>
</organism>
<proteinExistence type="evidence at protein level"/>
<keyword id="KW-0002">3D-structure</keyword>
<keyword id="KW-0025">Alternative splicing</keyword>
<keyword id="KW-1003">Cell membrane</keyword>
<keyword id="KW-0472">Membrane</keyword>
<keyword id="KW-0597">Phosphoprotein</keyword>
<keyword id="KW-1267">Proteomics identification</keyword>
<keyword id="KW-1185">Reference proteome</keyword>
<keyword id="KW-0770">Synapse</keyword>
<keyword id="KW-0832">Ubl conjugation</keyword>